<evidence type="ECO:0000255" key="1">
    <source>
        <dbReference type="HAMAP-Rule" id="MF_01390"/>
    </source>
</evidence>
<sequence>MEEFQGYLELDKSRQHDFLYPLIFQEYIYALAHDHGLNRSILLENVCYDNKSSSLIVKRLIXRMYQQNHLIISVNDSNQNPFLGHNKNLYSQMISEGFAVIVEIPFSLRSVSSLEGKEIXQSHNLXSIHSIFPFLEDKFLHLNYVSDILIPHPIHLEILVQTLRYWVKDASSLHLFLFFFYEYYXWNSLIXPXKSISXFSXXXXXXXXXXXXXXXXXXXXXXXFFRNQSSYLRSTSSGALLERIYFYGKIKHLVEVFVNDFQAILWLFKDPFMHYVRYQGKSILASKGTPLLMNKWKYYLVNFWQCHFYVWSQPGRIYINQLSNHSFDFLGYLSSVGLNPSVVRSQMLENSFIIDNAIKKFDIIVPIIPLIGSLAKAKFCNVLGHPISKPARADSSDSDIIDRFVRICRNLSHYHSGSSKKKSLYRIKYILRLSCARTLARKHKSTVRAFLKRLGSGLLEEFLTEEEQVLSLIFPKASSTSRRLYRGRIWYFDIISINDLANHE</sequence>
<accession>Q9GGJ6</accession>
<geneLocation type="chloroplast"/>
<comment type="function">
    <text evidence="1">Usually encoded in the trnK tRNA gene intron. Probably assists in splicing its own and other chloroplast group II introns.</text>
</comment>
<comment type="subcellular location">
    <subcellularLocation>
        <location>Plastid</location>
        <location>Chloroplast</location>
    </subcellularLocation>
</comment>
<comment type="similarity">
    <text evidence="1">Belongs to the intron maturase 2 family. MatK subfamily.</text>
</comment>
<gene>
    <name evidence="1" type="primary">matK</name>
</gene>
<organism>
    <name type="scientific">Hamamelis mollis</name>
    <name type="common">Chinese witch hazel</name>
    <dbReference type="NCBI Taxonomy" id="4396"/>
    <lineage>
        <taxon>Eukaryota</taxon>
        <taxon>Viridiplantae</taxon>
        <taxon>Streptophyta</taxon>
        <taxon>Embryophyta</taxon>
        <taxon>Tracheophyta</taxon>
        <taxon>Spermatophyta</taxon>
        <taxon>Magnoliopsida</taxon>
        <taxon>eudicotyledons</taxon>
        <taxon>Gunneridae</taxon>
        <taxon>Pentapetalae</taxon>
        <taxon>Saxifragales</taxon>
        <taxon>Hamamelidaceae</taxon>
        <taxon>Hamamelis</taxon>
    </lineage>
</organism>
<dbReference type="EMBL" id="AF248619">
    <property type="protein sequence ID" value="AAG22604.1"/>
    <property type="molecule type" value="Genomic_DNA"/>
</dbReference>
<dbReference type="GO" id="GO:0009507">
    <property type="term" value="C:chloroplast"/>
    <property type="evidence" value="ECO:0007669"/>
    <property type="project" value="UniProtKB-SubCell"/>
</dbReference>
<dbReference type="GO" id="GO:0003723">
    <property type="term" value="F:RNA binding"/>
    <property type="evidence" value="ECO:0007669"/>
    <property type="project" value="UniProtKB-KW"/>
</dbReference>
<dbReference type="GO" id="GO:0006397">
    <property type="term" value="P:mRNA processing"/>
    <property type="evidence" value="ECO:0007669"/>
    <property type="project" value="UniProtKB-KW"/>
</dbReference>
<dbReference type="GO" id="GO:0008380">
    <property type="term" value="P:RNA splicing"/>
    <property type="evidence" value="ECO:0007669"/>
    <property type="project" value="UniProtKB-UniRule"/>
</dbReference>
<dbReference type="GO" id="GO:0008033">
    <property type="term" value="P:tRNA processing"/>
    <property type="evidence" value="ECO:0007669"/>
    <property type="project" value="UniProtKB-KW"/>
</dbReference>
<dbReference type="HAMAP" id="MF_01390">
    <property type="entry name" value="MatK"/>
    <property type="match status" value="1"/>
</dbReference>
<dbReference type="InterPro" id="IPR024937">
    <property type="entry name" value="Domain_X"/>
</dbReference>
<dbReference type="InterPro" id="IPR002866">
    <property type="entry name" value="Maturase_MatK"/>
</dbReference>
<dbReference type="InterPro" id="IPR024942">
    <property type="entry name" value="Maturase_MatK_N"/>
</dbReference>
<dbReference type="PANTHER" id="PTHR34811">
    <property type="entry name" value="MATURASE K"/>
    <property type="match status" value="1"/>
</dbReference>
<dbReference type="PANTHER" id="PTHR34811:SF1">
    <property type="entry name" value="MATURASE K"/>
    <property type="match status" value="1"/>
</dbReference>
<dbReference type="Pfam" id="PF01348">
    <property type="entry name" value="Intron_maturas2"/>
    <property type="match status" value="1"/>
</dbReference>
<dbReference type="Pfam" id="PF01824">
    <property type="entry name" value="MatK_N"/>
    <property type="match status" value="1"/>
</dbReference>
<name>MATK_HAMMO</name>
<feature type="chain" id="PRO_0000143414" description="Maturase K">
    <location>
        <begin position="1"/>
        <end position="504"/>
    </location>
</feature>
<reference key="1">
    <citation type="journal article" date="2000" name="Harv. Pap. Bot.">
        <title>Phylogeny and biogeography of Hamamelis (Hamamelidaceae).</title>
        <authorList>
            <person name="Li J."/>
            <person name="Bogle A.L."/>
            <person name="Klein A.S."/>
            <person name="Donoghue M.J."/>
        </authorList>
    </citation>
    <scope>NUCLEOTIDE SEQUENCE [GENOMIC DNA]</scope>
</reference>
<protein>
    <recommendedName>
        <fullName evidence="1">Maturase K</fullName>
    </recommendedName>
    <alternativeName>
        <fullName evidence="1">Intron maturase</fullName>
    </alternativeName>
</protein>
<proteinExistence type="inferred from homology"/>
<keyword id="KW-0150">Chloroplast</keyword>
<keyword id="KW-0507">mRNA processing</keyword>
<keyword id="KW-0934">Plastid</keyword>
<keyword id="KW-0694">RNA-binding</keyword>
<keyword id="KW-0819">tRNA processing</keyword>